<evidence type="ECO:0000250" key="1"/>
<evidence type="ECO:0000255" key="2"/>
<evidence type="ECO:0000255" key="3">
    <source>
        <dbReference type="PROSITE-ProRule" id="PRU00068"/>
    </source>
</evidence>
<evidence type="ECO:0000255" key="4">
    <source>
        <dbReference type="PROSITE-ProRule" id="PRU00276"/>
    </source>
</evidence>
<evidence type="ECO:0000255" key="5">
    <source>
        <dbReference type="PROSITE-ProRule" id="PRU10095"/>
    </source>
</evidence>
<evidence type="ECO:0000305" key="6"/>
<gene>
    <name type="primary">ADAM21</name>
</gene>
<feature type="signal peptide" evidence="2">
    <location>
        <begin position="1"/>
        <end position="31"/>
    </location>
</feature>
<feature type="propeptide" id="PRO_0000029108" evidence="2">
    <location>
        <begin position="32"/>
        <end position="196"/>
    </location>
</feature>
<feature type="chain" id="PRO_0000029109" description="Disintegrin and metalloproteinase domain-containing protein 21">
    <location>
        <begin position="197"/>
        <end position="722"/>
    </location>
</feature>
<feature type="topological domain" description="Extracellular" evidence="2">
    <location>
        <begin position="197"/>
        <end position="681"/>
    </location>
</feature>
<feature type="transmembrane region" description="Helical" evidence="2">
    <location>
        <begin position="682"/>
        <end position="702"/>
    </location>
</feature>
<feature type="topological domain" description="Cytoplasmic" evidence="2">
    <location>
        <begin position="703"/>
        <end position="722"/>
    </location>
</feature>
<feature type="domain" description="Peptidase M12B" evidence="4">
    <location>
        <begin position="208"/>
        <end position="398"/>
    </location>
</feature>
<feature type="domain" description="Disintegrin" evidence="3">
    <location>
        <begin position="406"/>
        <end position="492"/>
    </location>
</feature>
<feature type="domain" description="EGF-like">
    <location>
        <begin position="634"/>
        <end position="663"/>
    </location>
</feature>
<feature type="short sequence motif" description="Cysteine switch" evidence="1">
    <location>
        <begin position="171"/>
        <end position="178"/>
    </location>
</feature>
<feature type="active site" evidence="4 5">
    <location>
        <position position="342"/>
    </location>
</feature>
<feature type="binding site" description="in inhibited form" evidence="1">
    <location>
        <position position="173"/>
    </location>
    <ligand>
        <name>Zn(2+)</name>
        <dbReference type="ChEBI" id="CHEBI:29105"/>
        <note>catalytic</note>
    </ligand>
</feature>
<feature type="binding site" evidence="2">
    <location>
        <position position="341"/>
    </location>
    <ligand>
        <name>Zn(2+)</name>
        <dbReference type="ChEBI" id="CHEBI:29105"/>
        <note>catalytic</note>
    </ligand>
</feature>
<feature type="binding site" evidence="2">
    <location>
        <position position="345"/>
    </location>
    <ligand>
        <name>Zn(2+)</name>
        <dbReference type="ChEBI" id="CHEBI:29105"/>
        <note>catalytic</note>
    </ligand>
</feature>
<feature type="binding site" evidence="2">
    <location>
        <position position="351"/>
    </location>
    <ligand>
        <name>Zn(2+)</name>
        <dbReference type="ChEBI" id="CHEBI:29105"/>
        <note>catalytic</note>
    </ligand>
</feature>
<feature type="glycosylation site" description="N-linked (GlcNAc...) asparagine" evidence="2">
    <location>
        <position position="164"/>
    </location>
</feature>
<feature type="glycosylation site" description="N-linked (GlcNAc...) asparagine" evidence="2">
    <location>
        <position position="227"/>
    </location>
</feature>
<feature type="glycosylation site" description="N-linked (GlcNAc...) asparagine" evidence="2">
    <location>
        <position position="377"/>
    </location>
</feature>
<feature type="glycosylation site" description="N-linked (GlcNAc...) asparagine" evidence="2">
    <location>
        <position position="437"/>
    </location>
</feature>
<feature type="glycosylation site" description="N-linked (GlcNAc...) asparagine" evidence="2">
    <location>
        <position position="478"/>
    </location>
</feature>
<feature type="glycosylation site" description="N-linked (GlcNAc...) asparagine" evidence="2">
    <location>
        <position position="546"/>
    </location>
</feature>
<feature type="glycosylation site" description="N-linked (GlcNAc...) asparagine" evidence="2">
    <location>
        <position position="600"/>
    </location>
</feature>
<feature type="disulfide bond" evidence="1">
    <location>
        <begin position="316"/>
        <end position="393"/>
    </location>
</feature>
<feature type="disulfide bond" evidence="1">
    <location>
        <begin position="356"/>
        <end position="378"/>
    </location>
</feature>
<feature type="disulfide bond" evidence="1">
    <location>
        <begin position="358"/>
        <end position="363"/>
    </location>
</feature>
<feature type="disulfide bond" evidence="1">
    <location>
        <begin position="464"/>
        <end position="484"/>
    </location>
</feature>
<feature type="disulfide bond" evidence="1">
    <location>
        <begin position="634"/>
        <end position="645"/>
    </location>
</feature>
<feature type="disulfide bond" evidence="1">
    <location>
        <begin position="639"/>
        <end position="651"/>
    </location>
</feature>
<feature type="disulfide bond" evidence="1">
    <location>
        <begin position="653"/>
        <end position="662"/>
    </location>
</feature>
<feature type="sequence conflict" description="In Ref. 1; AAD55255 and 3; AAI09025/AAI09026." evidence="6" ref="1 3">
    <original>D</original>
    <variation>E</variation>
    <location>
        <position position="95"/>
    </location>
</feature>
<feature type="sequence conflict" description="In Ref. 1; AAD55255 and 3; AAI09025/AAI09026." evidence="6" ref="1 3">
    <original>A</original>
    <variation>G</variation>
    <location>
        <position position="117"/>
    </location>
</feature>
<feature type="sequence conflict" description="In Ref. 1; AAD55255 and 3; AAI09025/AAI09026." evidence="6" ref="1 3">
    <original>I</original>
    <variation>V</variation>
    <location>
        <position position="161"/>
    </location>
</feature>
<feature type="sequence conflict" description="In Ref. 3; AAC52042." evidence="6" ref="3">
    <original>A</original>
    <variation>G</variation>
    <location>
        <position position="181"/>
    </location>
</feature>
<feature type="sequence conflict" description="In Ref. 1; AAD55255 and 3; AAI09025/AAI09026." evidence="6" ref="1 3">
    <original>K</original>
    <variation>Q</variation>
    <location>
        <position position="247"/>
    </location>
</feature>
<feature type="sequence conflict" description="In Ref. 3; AAC52042." evidence="6" ref="3">
    <original>H</original>
    <variation>Y</variation>
    <location>
        <position position="345"/>
    </location>
</feature>
<accession>Q9UKJ8</accession>
<accession>O43507</accession>
<accession>Q2VPC6</accession>
<accession>Q32MR0</accession>
<keyword id="KW-1015">Disulfide bond</keyword>
<keyword id="KW-0245">EGF-like domain</keyword>
<keyword id="KW-0325">Glycoprotein</keyword>
<keyword id="KW-0378">Hydrolase</keyword>
<keyword id="KW-0472">Membrane</keyword>
<keyword id="KW-0479">Metal-binding</keyword>
<keyword id="KW-0482">Metalloprotease</keyword>
<keyword id="KW-0645">Protease</keyword>
<keyword id="KW-1267">Proteomics identification</keyword>
<keyword id="KW-1185">Reference proteome</keyword>
<keyword id="KW-0732">Signal</keyword>
<keyword id="KW-0812">Transmembrane</keyword>
<keyword id="KW-1133">Transmembrane helix</keyword>
<keyword id="KW-0862">Zinc</keyword>
<keyword id="KW-0865">Zymogen</keyword>
<name>ADA21_HUMAN</name>
<reference key="1">
    <citation type="journal article" date="1999" name="Gene">
        <title>The identification of seven metalloproteinase-disintegrin (ADAM) genes from genomic libraries.</title>
        <authorList>
            <person name="Poindexter K."/>
            <person name="Nelson N."/>
            <person name="DuBose R.F."/>
            <person name="Black R.A."/>
            <person name="Cerretti D.P."/>
        </authorList>
    </citation>
    <scope>NUCLEOTIDE SEQUENCE [GENOMIC DNA]</scope>
</reference>
<reference key="2">
    <citation type="journal article" date="2003" name="Nature">
        <title>The DNA sequence and analysis of human chromosome 14.</title>
        <authorList>
            <person name="Heilig R."/>
            <person name="Eckenberg R."/>
            <person name="Petit J.-L."/>
            <person name="Fonknechten N."/>
            <person name="Da Silva C."/>
            <person name="Cattolico L."/>
            <person name="Levy M."/>
            <person name="Barbe V."/>
            <person name="De Berardinis V."/>
            <person name="Ureta-Vidal A."/>
            <person name="Pelletier E."/>
            <person name="Vico V."/>
            <person name="Anthouard V."/>
            <person name="Rowen L."/>
            <person name="Madan A."/>
            <person name="Qin S."/>
            <person name="Sun H."/>
            <person name="Du H."/>
            <person name="Pepin K."/>
            <person name="Artiguenave F."/>
            <person name="Robert C."/>
            <person name="Cruaud C."/>
            <person name="Bruels T."/>
            <person name="Jaillon O."/>
            <person name="Friedlander L."/>
            <person name="Samson G."/>
            <person name="Brottier P."/>
            <person name="Cure S."/>
            <person name="Segurens B."/>
            <person name="Aniere F."/>
            <person name="Samain S."/>
            <person name="Crespeau H."/>
            <person name="Abbasi N."/>
            <person name="Aiach N."/>
            <person name="Boscus D."/>
            <person name="Dickhoff R."/>
            <person name="Dors M."/>
            <person name="Dubois I."/>
            <person name="Friedman C."/>
            <person name="Gouyvenoux M."/>
            <person name="James R."/>
            <person name="Madan A."/>
            <person name="Mairey-Estrada B."/>
            <person name="Mangenot S."/>
            <person name="Martins N."/>
            <person name="Menard M."/>
            <person name="Oztas S."/>
            <person name="Ratcliffe A."/>
            <person name="Shaffer T."/>
            <person name="Trask B."/>
            <person name="Vacherie B."/>
            <person name="Bellemere C."/>
            <person name="Belser C."/>
            <person name="Besnard-Gonnet M."/>
            <person name="Bartol-Mavel D."/>
            <person name="Boutard M."/>
            <person name="Briez-Silla S."/>
            <person name="Combette S."/>
            <person name="Dufosse-Laurent V."/>
            <person name="Ferron C."/>
            <person name="Lechaplais C."/>
            <person name="Louesse C."/>
            <person name="Muselet D."/>
            <person name="Magdelenat G."/>
            <person name="Pateau E."/>
            <person name="Petit E."/>
            <person name="Sirvain-Trukniewicz P."/>
            <person name="Trybou A."/>
            <person name="Vega-Czarny N."/>
            <person name="Bataille E."/>
            <person name="Bluet E."/>
            <person name="Bordelais I."/>
            <person name="Dubois M."/>
            <person name="Dumont C."/>
            <person name="Guerin T."/>
            <person name="Haffray S."/>
            <person name="Hammadi R."/>
            <person name="Muanga J."/>
            <person name="Pellouin V."/>
            <person name="Robert D."/>
            <person name="Wunderle E."/>
            <person name="Gauguet G."/>
            <person name="Roy A."/>
            <person name="Sainte-Marthe L."/>
            <person name="Verdier J."/>
            <person name="Verdier-Discala C."/>
            <person name="Hillier L.W."/>
            <person name="Fulton L."/>
            <person name="McPherson J."/>
            <person name="Matsuda F."/>
            <person name="Wilson R."/>
            <person name="Scarpelli C."/>
            <person name="Gyapay G."/>
            <person name="Wincker P."/>
            <person name="Saurin W."/>
            <person name="Quetier F."/>
            <person name="Waterston R."/>
            <person name="Hood L."/>
            <person name="Weissenbach J."/>
        </authorList>
    </citation>
    <scope>NUCLEOTIDE SEQUENCE [LARGE SCALE GENOMIC DNA]</scope>
</reference>
<reference key="3">
    <citation type="journal article" date="2004" name="Genome Res.">
        <title>The status, quality, and expansion of the NIH full-length cDNA project: the Mammalian Gene Collection (MGC).</title>
        <authorList>
            <consortium name="The MGC Project Team"/>
        </authorList>
    </citation>
    <scope>NUCLEOTIDE SEQUENCE [LARGE SCALE MRNA]</scope>
</reference>
<reference key="4">
    <citation type="journal article" date="1998" name="Gene">
        <title>ADAM 20 and 21; two novel human testis-specific membrane metalloproteases with similarity to fertilin-alpha.</title>
        <authorList>
            <person name="Hooft van Huijsduijnen R."/>
        </authorList>
    </citation>
    <scope>NUCLEOTIDE SEQUENCE [MRNA] OF 181-722</scope>
    <source>
        <tissue>Testis</tissue>
    </source>
</reference>
<proteinExistence type="evidence at protein level"/>
<organism>
    <name type="scientific">Homo sapiens</name>
    <name type="common">Human</name>
    <dbReference type="NCBI Taxonomy" id="9606"/>
    <lineage>
        <taxon>Eukaryota</taxon>
        <taxon>Metazoa</taxon>
        <taxon>Chordata</taxon>
        <taxon>Craniata</taxon>
        <taxon>Vertebrata</taxon>
        <taxon>Euteleostomi</taxon>
        <taxon>Mammalia</taxon>
        <taxon>Eutheria</taxon>
        <taxon>Euarchontoglires</taxon>
        <taxon>Primates</taxon>
        <taxon>Haplorrhini</taxon>
        <taxon>Catarrhini</taxon>
        <taxon>Hominidae</taxon>
        <taxon>Homo</taxon>
    </lineage>
</organism>
<dbReference type="EC" id="3.4.24.-"/>
<dbReference type="EMBL" id="AF158644">
    <property type="protein sequence ID" value="AAD55255.1"/>
    <property type="molecule type" value="Genomic_DNA"/>
</dbReference>
<dbReference type="EMBL" id="AL357153">
    <property type="status" value="NOT_ANNOTATED_CDS"/>
    <property type="molecule type" value="Genomic_DNA"/>
</dbReference>
<dbReference type="EMBL" id="AL391223">
    <property type="status" value="NOT_ANNOTATED_CDS"/>
    <property type="molecule type" value="Genomic_DNA"/>
</dbReference>
<dbReference type="EMBL" id="BC109024">
    <property type="protein sequence ID" value="AAI09025.1"/>
    <property type="molecule type" value="mRNA"/>
</dbReference>
<dbReference type="EMBL" id="BC109025">
    <property type="protein sequence ID" value="AAI09026.1"/>
    <property type="molecule type" value="mRNA"/>
</dbReference>
<dbReference type="EMBL" id="AF029900">
    <property type="protein sequence ID" value="AAC52042.1"/>
    <property type="molecule type" value="mRNA"/>
</dbReference>
<dbReference type="CCDS" id="CCDS9804.1"/>
<dbReference type="RefSeq" id="NP_003804.2">
    <property type="nucleotide sequence ID" value="NM_003813.4"/>
</dbReference>
<dbReference type="SMR" id="Q9UKJ8"/>
<dbReference type="BioGRID" id="114283">
    <property type="interactions" value="113"/>
</dbReference>
<dbReference type="FunCoup" id="Q9UKJ8">
    <property type="interactions" value="82"/>
</dbReference>
<dbReference type="IntAct" id="Q9UKJ8">
    <property type="interactions" value="62"/>
</dbReference>
<dbReference type="STRING" id="9606.ENSP00000474385"/>
<dbReference type="MEROPS" id="M12.234"/>
<dbReference type="GlyCosmos" id="Q9UKJ8">
    <property type="glycosylation" value="7 sites, No reported glycans"/>
</dbReference>
<dbReference type="GlyGen" id="Q9UKJ8">
    <property type="glycosylation" value="7 sites, 4 N-linked glycans (5 sites)"/>
</dbReference>
<dbReference type="iPTMnet" id="Q9UKJ8"/>
<dbReference type="PhosphoSitePlus" id="Q9UKJ8"/>
<dbReference type="BioMuta" id="ADAM21"/>
<dbReference type="DMDM" id="296434388"/>
<dbReference type="MassIVE" id="Q9UKJ8"/>
<dbReference type="PaxDb" id="9606-ENSP00000474385"/>
<dbReference type="PeptideAtlas" id="Q9UKJ8"/>
<dbReference type="ProteomicsDB" id="84810"/>
<dbReference type="Antibodypedia" id="25130">
    <property type="antibodies" value="36 antibodies from 17 providers"/>
</dbReference>
<dbReference type="DNASU" id="8747"/>
<dbReference type="Ensembl" id="ENST00000603540.2">
    <property type="protein sequence ID" value="ENSP00000474385.1"/>
    <property type="gene ID" value="ENSG00000139985.8"/>
</dbReference>
<dbReference type="Ensembl" id="ENST00000679631.1">
    <property type="protein sequence ID" value="ENSP00000506213.1"/>
    <property type="gene ID" value="ENSG00000139985.8"/>
</dbReference>
<dbReference type="GeneID" id="8747"/>
<dbReference type="KEGG" id="hsa:8747"/>
<dbReference type="MANE-Select" id="ENST00000603540.2">
    <property type="protein sequence ID" value="ENSP00000474385.1"/>
    <property type="RefSeq nucleotide sequence ID" value="NM_003813.4"/>
    <property type="RefSeq protein sequence ID" value="NP_003804.2"/>
</dbReference>
<dbReference type="UCSC" id="uc001xmd.4">
    <property type="organism name" value="human"/>
</dbReference>
<dbReference type="AGR" id="HGNC:200"/>
<dbReference type="CTD" id="8747"/>
<dbReference type="DisGeNET" id="8747"/>
<dbReference type="GeneCards" id="ADAM21"/>
<dbReference type="HGNC" id="HGNC:200">
    <property type="gene designation" value="ADAM21"/>
</dbReference>
<dbReference type="HPA" id="ENSG00000139985">
    <property type="expression patterns" value="Tissue enriched (testis)"/>
</dbReference>
<dbReference type="MIM" id="603713">
    <property type="type" value="gene"/>
</dbReference>
<dbReference type="neXtProt" id="NX_Q9UKJ8"/>
<dbReference type="OpenTargets" id="ENSG00000139985"/>
<dbReference type="PharmGKB" id="PA24517"/>
<dbReference type="VEuPathDB" id="HostDB:ENSG00000139985"/>
<dbReference type="eggNOG" id="KOG3607">
    <property type="taxonomic scope" value="Eukaryota"/>
</dbReference>
<dbReference type="GeneTree" id="ENSGT00940000162712"/>
<dbReference type="HOGENOM" id="CLU_012714_4_0_1"/>
<dbReference type="InParanoid" id="Q9UKJ8"/>
<dbReference type="OMA" id="WWTHSWF"/>
<dbReference type="OrthoDB" id="5951731at2759"/>
<dbReference type="PAN-GO" id="Q9UKJ8">
    <property type="GO annotations" value="4 GO annotations based on evolutionary models"/>
</dbReference>
<dbReference type="PhylomeDB" id="Q9UKJ8"/>
<dbReference type="TreeFam" id="TF314733"/>
<dbReference type="PathwayCommons" id="Q9UKJ8"/>
<dbReference type="Reactome" id="R-HSA-2534343">
    <property type="pathway name" value="Interaction With Cumulus Cells And The Zona Pellucida"/>
</dbReference>
<dbReference type="SignaLink" id="Q9UKJ8"/>
<dbReference type="BioGRID-ORCS" id="8747">
    <property type="hits" value="34 hits in 1114 CRISPR screens"/>
</dbReference>
<dbReference type="GenomeRNAi" id="8747"/>
<dbReference type="Pharos" id="Q9UKJ8">
    <property type="development level" value="Tdark"/>
</dbReference>
<dbReference type="PRO" id="PR:Q9UKJ8"/>
<dbReference type="Proteomes" id="UP000005640">
    <property type="component" value="Chromosome 14"/>
</dbReference>
<dbReference type="RNAct" id="Q9UKJ8">
    <property type="molecule type" value="protein"/>
</dbReference>
<dbReference type="Bgee" id="ENSG00000139985">
    <property type="expression patterns" value="Expressed in sperm and 81 other cell types or tissues"/>
</dbReference>
<dbReference type="GO" id="GO:0030424">
    <property type="term" value="C:axon"/>
    <property type="evidence" value="ECO:0007669"/>
    <property type="project" value="Ensembl"/>
</dbReference>
<dbReference type="GO" id="GO:0009897">
    <property type="term" value="C:external side of plasma membrane"/>
    <property type="evidence" value="ECO:0000318"/>
    <property type="project" value="GO_Central"/>
</dbReference>
<dbReference type="GO" id="GO:0043025">
    <property type="term" value="C:neuronal cell body"/>
    <property type="evidence" value="ECO:0007669"/>
    <property type="project" value="Ensembl"/>
</dbReference>
<dbReference type="GO" id="GO:0005886">
    <property type="term" value="C:plasma membrane"/>
    <property type="evidence" value="ECO:0000318"/>
    <property type="project" value="GO_Central"/>
</dbReference>
<dbReference type="GO" id="GO:1990913">
    <property type="term" value="C:sperm head plasma membrane"/>
    <property type="evidence" value="ECO:0000318"/>
    <property type="project" value="GO_Central"/>
</dbReference>
<dbReference type="GO" id="GO:0046872">
    <property type="term" value="F:metal ion binding"/>
    <property type="evidence" value="ECO:0007669"/>
    <property type="project" value="UniProtKB-KW"/>
</dbReference>
<dbReference type="GO" id="GO:0004222">
    <property type="term" value="F:metalloendopeptidase activity"/>
    <property type="evidence" value="ECO:0000318"/>
    <property type="project" value="GO_Central"/>
</dbReference>
<dbReference type="GO" id="GO:0008237">
    <property type="term" value="F:metallopeptidase activity"/>
    <property type="evidence" value="ECO:0000304"/>
    <property type="project" value="ProtInc"/>
</dbReference>
<dbReference type="GO" id="GO:0008584">
    <property type="term" value="P:male gonad development"/>
    <property type="evidence" value="ECO:0000318"/>
    <property type="project" value="GO_Central"/>
</dbReference>
<dbReference type="GO" id="GO:0006508">
    <property type="term" value="P:proteolysis"/>
    <property type="evidence" value="ECO:0000318"/>
    <property type="project" value="GO_Central"/>
</dbReference>
<dbReference type="GO" id="GO:0007338">
    <property type="term" value="P:single fertilization"/>
    <property type="evidence" value="ECO:0000304"/>
    <property type="project" value="ProtInc"/>
</dbReference>
<dbReference type="CDD" id="cd04269">
    <property type="entry name" value="ZnMc_adamalysin_II_like"/>
    <property type="match status" value="1"/>
</dbReference>
<dbReference type="FunFam" id="3.40.390.10:FF:000002">
    <property type="entry name" value="Disintegrin and metalloproteinase domain-containing protein 22"/>
    <property type="match status" value="1"/>
</dbReference>
<dbReference type="FunFam" id="4.10.70.10:FF:000001">
    <property type="entry name" value="Disintegrin and metalloproteinase domain-containing protein 22"/>
    <property type="match status" value="1"/>
</dbReference>
<dbReference type="Gene3D" id="3.40.390.10">
    <property type="entry name" value="Collagenase (Catalytic Domain)"/>
    <property type="match status" value="1"/>
</dbReference>
<dbReference type="Gene3D" id="4.10.70.10">
    <property type="entry name" value="Disintegrin domain"/>
    <property type="match status" value="1"/>
</dbReference>
<dbReference type="InterPro" id="IPR006586">
    <property type="entry name" value="ADAM_Cys-rich"/>
</dbReference>
<dbReference type="InterPro" id="IPR018358">
    <property type="entry name" value="Disintegrin_CS"/>
</dbReference>
<dbReference type="InterPro" id="IPR001762">
    <property type="entry name" value="Disintegrin_dom"/>
</dbReference>
<dbReference type="InterPro" id="IPR036436">
    <property type="entry name" value="Disintegrin_dom_sf"/>
</dbReference>
<dbReference type="InterPro" id="IPR000742">
    <property type="entry name" value="EGF-like_dom"/>
</dbReference>
<dbReference type="InterPro" id="IPR024079">
    <property type="entry name" value="MetalloPept_cat_dom_sf"/>
</dbReference>
<dbReference type="InterPro" id="IPR001590">
    <property type="entry name" value="Peptidase_M12B"/>
</dbReference>
<dbReference type="InterPro" id="IPR002870">
    <property type="entry name" value="Peptidase_M12B_N"/>
</dbReference>
<dbReference type="InterPro" id="IPR034027">
    <property type="entry name" value="Reprolysin_adamalysin"/>
</dbReference>
<dbReference type="PANTHER" id="PTHR11905">
    <property type="entry name" value="ADAM A DISINTEGRIN AND METALLOPROTEASE DOMAIN"/>
    <property type="match status" value="1"/>
</dbReference>
<dbReference type="PANTHER" id="PTHR11905:SF116">
    <property type="entry name" value="DISINTEGRIN AND METALLOPROTEINASE DOMAIN-CONTAINING PROTEIN 21"/>
    <property type="match status" value="1"/>
</dbReference>
<dbReference type="Pfam" id="PF08516">
    <property type="entry name" value="ADAM_CR"/>
    <property type="match status" value="1"/>
</dbReference>
<dbReference type="Pfam" id="PF00200">
    <property type="entry name" value="Disintegrin"/>
    <property type="match status" value="1"/>
</dbReference>
<dbReference type="Pfam" id="PF01562">
    <property type="entry name" value="Pep_M12B_propep"/>
    <property type="match status" value="1"/>
</dbReference>
<dbReference type="Pfam" id="PF01421">
    <property type="entry name" value="Reprolysin"/>
    <property type="match status" value="1"/>
</dbReference>
<dbReference type="PRINTS" id="PR00289">
    <property type="entry name" value="DISINTEGRIN"/>
</dbReference>
<dbReference type="SMART" id="SM00608">
    <property type="entry name" value="ACR"/>
    <property type="match status" value="1"/>
</dbReference>
<dbReference type="SMART" id="SM00050">
    <property type="entry name" value="DISIN"/>
    <property type="match status" value="1"/>
</dbReference>
<dbReference type="SUPFAM" id="SSF57552">
    <property type="entry name" value="Blood coagulation inhibitor (disintegrin)"/>
    <property type="match status" value="1"/>
</dbReference>
<dbReference type="SUPFAM" id="SSF55486">
    <property type="entry name" value="Metalloproteases ('zincins'), catalytic domain"/>
    <property type="match status" value="1"/>
</dbReference>
<dbReference type="PROSITE" id="PS50215">
    <property type="entry name" value="ADAM_MEPRO"/>
    <property type="match status" value="1"/>
</dbReference>
<dbReference type="PROSITE" id="PS00427">
    <property type="entry name" value="DISINTEGRIN_1"/>
    <property type="match status" value="1"/>
</dbReference>
<dbReference type="PROSITE" id="PS50214">
    <property type="entry name" value="DISINTEGRIN_2"/>
    <property type="match status" value="1"/>
</dbReference>
<dbReference type="PROSITE" id="PS01186">
    <property type="entry name" value="EGF_2"/>
    <property type="match status" value="1"/>
</dbReference>
<dbReference type="PROSITE" id="PS00142">
    <property type="entry name" value="ZINC_PROTEASE"/>
    <property type="match status" value="1"/>
</dbReference>
<comment type="function">
    <text>May be involved in sperm maturation and/or fertilization. May also be involved in epithelia functions associated with establishing and maintaining gradients of ions or nutrients.</text>
</comment>
<comment type="cofactor">
    <cofactor evidence="6">
        <name>Zn(2+)</name>
        <dbReference type="ChEBI" id="CHEBI:29105"/>
    </cofactor>
    <text evidence="6">Binds 1 zinc ion per subunit.</text>
</comment>
<comment type="interaction">
    <interactant intactId="EBI-12046857">
        <id>Q9UKJ8</id>
    </interactant>
    <interactant intactId="EBI-2835940">
        <id>P34972</id>
        <label>CNR2</label>
    </interactant>
    <organismsDiffer>false</organismsDiffer>
    <experiments>3</experiments>
</comment>
<comment type="interaction">
    <interactant intactId="EBI-12046857">
        <id>Q9UKJ8</id>
    </interactant>
    <interactant intactId="EBI-347996">
        <id>O43765</id>
        <label>SGTA</label>
    </interactant>
    <organismsDiffer>false</organismsDiffer>
    <experiments>3</experiments>
</comment>
<comment type="subcellular location">
    <subcellularLocation>
        <location>Membrane</location>
        <topology>Single-pass type I membrane protein</topology>
    </subcellularLocation>
</comment>
<comment type="domain">
    <text>A tripeptide motif (VGE) within disintegrin-like domain could be involved in the binding to egg integrin receptor and thus could mediate sperm/egg binding.</text>
</comment>
<comment type="domain">
    <text>The cysteine-rich domain encodes putative cell-fusion peptides, which could be involved in sperm-egg fusion.</text>
</comment>
<comment type="domain">
    <text>The conserved cysteine present in the cysteine-switch motif binds the catalytic zinc ion, thus inhibiting the enzyme. The dissociation of the cysteine from the zinc ion upon the activation-peptide release activates the enzyme.</text>
</comment>
<comment type="PTM">
    <text>Has no obvious cleavage site for furin endopeptidase, suggesting that the proteolytic processing is regulated.</text>
</comment>
<comment type="miscellaneous">
    <text>May be the functional equivalent of ADAM 1/fertilin alpha which is a pseudogene in human.</text>
</comment>
<sequence>MAVDGTLVYIRVTLLLLWLGVFLSISGYCQAGPSQHFTSPEVVIPLKVISRGRSAKAPGWLSYSLRFGGQKHVVHMRVKKLLVSRHLPVFTYTDDRALLEDQLFIPDDCYYHGYVEAAPESLVVFSACFGGFRGVLKISGLTYEIEPIRHSATFEHLVYKINSNETQFPAMRCGLTEKEVARQQLEFEEAENSALEPKSAGDWWTHAWFLELVVVVNHDFFIYSQSNISKVQEDVFLVVNIVDSMYKQLGTYIILIGIEIWNQGNVFPMTSIEQVLNDFSQWKQISLSQLQHDAAHMFIKNSLISILGLAYVAGICRPPIDCGVDNFQGDTWSLFANTVAHELGHTLGMQHDEEFCFCGERGCIMNTFRVPAEKFTNCSYADFMKTTLNQGSCLHNPPRLGEIFMLKRCGNGVVEREEQCDCGSVQQCEQDACCLLNCTLRPGAACAFGLCCKDCKFMPSGELCRQEVNECDLPEWCNGTSHQCPEDRYVQDGIPCSDSAYCYQKRCNNHDQHCREIFGKDAKSASQNCYKEINSQGNRFGHCGINGTTYLKCHISDVFCGRVQCENVRDIPLLQDHFTLQHTHINGVTCWGIDYHLRMNISDIGEVKDGTVCGPGKICIHKKCVSLSVLSHVCLPETCNMKGICNNKHHCHCGYGWSPPYCQHRGYGGSIDSGPASAKRGVFLPLIVIPSLSVLTFLFTVGLLMYLRQCSGPKETKAHSSG</sequence>
<protein>
    <recommendedName>
        <fullName>Disintegrin and metalloproteinase domain-containing protein 21</fullName>
        <shortName>ADAM 21</shortName>
        <ecNumber>3.4.24.-</ecNumber>
    </recommendedName>
</protein>